<evidence type="ECO:0000250" key="1"/>
<evidence type="ECO:0000255" key="2">
    <source>
        <dbReference type="PROSITE-ProRule" id="PRU00809"/>
    </source>
</evidence>
<evidence type="ECO:0000269" key="3">
    <source>
    </source>
</evidence>
<evidence type="ECO:0000305" key="4"/>
<dbReference type="EC" id="3.4.25.1"/>
<dbReference type="EMBL" id="CU329670">
    <property type="protein sequence ID" value="CAA91242.1"/>
    <property type="molecule type" value="Genomic_DNA"/>
</dbReference>
<dbReference type="EMBL" id="AB000540">
    <property type="protein sequence ID" value="BAA19146.1"/>
    <property type="molecule type" value="mRNA"/>
</dbReference>
<dbReference type="PIR" id="T38282">
    <property type="entry name" value="S62498"/>
</dbReference>
<dbReference type="RefSeq" id="NP_594544.1">
    <property type="nucleotide sequence ID" value="NM_001019973.2"/>
</dbReference>
<dbReference type="SMR" id="Q09841"/>
<dbReference type="BioGRID" id="278296">
    <property type="interactions" value="9"/>
</dbReference>
<dbReference type="ComplexPortal" id="CPX-9077">
    <property type="entry name" value="26S proteasome complex"/>
</dbReference>
<dbReference type="FunCoup" id="Q09841">
    <property type="interactions" value="397"/>
</dbReference>
<dbReference type="STRING" id="284812.Q09841"/>
<dbReference type="MEROPS" id="T01.011"/>
<dbReference type="iPTMnet" id="Q09841"/>
<dbReference type="PaxDb" id="4896-SPAC23D3.07.1"/>
<dbReference type="EnsemblFungi" id="SPAC23D3.07.1">
    <property type="protein sequence ID" value="SPAC23D3.07.1:pep"/>
    <property type="gene ID" value="SPAC23D3.07"/>
</dbReference>
<dbReference type="GeneID" id="2541805"/>
<dbReference type="KEGG" id="spo:2541805"/>
<dbReference type="PomBase" id="SPAC23D3.07">
    <property type="gene designation" value="pup1"/>
</dbReference>
<dbReference type="VEuPathDB" id="FungiDB:SPAC23D3.07"/>
<dbReference type="eggNOG" id="KOG0173">
    <property type="taxonomic scope" value="Eukaryota"/>
</dbReference>
<dbReference type="HOGENOM" id="CLU_035750_3_0_1"/>
<dbReference type="InParanoid" id="Q09841"/>
<dbReference type="OMA" id="KQHLFRH"/>
<dbReference type="PhylomeDB" id="Q09841"/>
<dbReference type="Reactome" id="R-SPO-1236978">
    <property type="pathway name" value="Cross-presentation of soluble exogenous antigens (endosomes)"/>
</dbReference>
<dbReference type="Reactome" id="R-SPO-350562">
    <property type="pathway name" value="Regulation of ornithine decarboxylase (ODC)"/>
</dbReference>
<dbReference type="Reactome" id="R-SPO-5687128">
    <property type="pathway name" value="MAPK6/MAPK4 signaling"/>
</dbReference>
<dbReference type="Reactome" id="R-SPO-5689603">
    <property type="pathway name" value="UCH proteinases"/>
</dbReference>
<dbReference type="Reactome" id="R-SPO-5689880">
    <property type="pathway name" value="Ub-specific processing proteases"/>
</dbReference>
<dbReference type="Reactome" id="R-SPO-6798695">
    <property type="pathway name" value="Neutrophil degranulation"/>
</dbReference>
<dbReference type="Reactome" id="R-SPO-68949">
    <property type="pathway name" value="Orc1 removal from chromatin"/>
</dbReference>
<dbReference type="Reactome" id="R-SPO-69017">
    <property type="pathway name" value="CDK-mediated phosphorylation and removal of Cdc6"/>
</dbReference>
<dbReference type="Reactome" id="R-SPO-69601">
    <property type="pathway name" value="Ubiquitin Mediated Degradation of Phosphorylated Cdc25A"/>
</dbReference>
<dbReference type="Reactome" id="R-SPO-75815">
    <property type="pathway name" value="Ubiquitin-dependent degradation of Cyclin D"/>
</dbReference>
<dbReference type="Reactome" id="R-SPO-8854050">
    <property type="pathway name" value="FBXL7 down-regulates AURKA during mitotic entry and in early mitosis"/>
</dbReference>
<dbReference type="Reactome" id="R-SPO-8948751">
    <property type="pathway name" value="Regulation of PTEN stability and activity"/>
</dbReference>
<dbReference type="Reactome" id="R-SPO-8951664">
    <property type="pathway name" value="Neddylation"/>
</dbReference>
<dbReference type="Reactome" id="R-SPO-9755511">
    <property type="pathway name" value="KEAP1-NFE2L2 pathway"/>
</dbReference>
<dbReference type="Reactome" id="R-SPO-983168">
    <property type="pathway name" value="Antigen processing: Ubiquitination &amp; Proteasome degradation"/>
</dbReference>
<dbReference type="Reactome" id="R-SPO-9907900">
    <property type="pathway name" value="Proteasome assembly"/>
</dbReference>
<dbReference type="PRO" id="PR:Q09841"/>
<dbReference type="Proteomes" id="UP000002485">
    <property type="component" value="Chromosome I"/>
</dbReference>
<dbReference type="GO" id="GO:0005829">
    <property type="term" value="C:cytosol"/>
    <property type="evidence" value="ECO:0007005"/>
    <property type="project" value="PomBase"/>
</dbReference>
<dbReference type="GO" id="GO:0005635">
    <property type="term" value="C:nuclear envelope"/>
    <property type="evidence" value="ECO:0007005"/>
    <property type="project" value="PomBase"/>
</dbReference>
<dbReference type="GO" id="GO:0005634">
    <property type="term" value="C:nucleus"/>
    <property type="evidence" value="ECO:0007005"/>
    <property type="project" value="PomBase"/>
</dbReference>
<dbReference type="GO" id="GO:0019774">
    <property type="term" value="C:proteasome core complex, beta-subunit complex"/>
    <property type="evidence" value="ECO:0000314"/>
    <property type="project" value="PomBase"/>
</dbReference>
<dbReference type="GO" id="GO:0004175">
    <property type="term" value="F:endopeptidase activity"/>
    <property type="evidence" value="ECO:0000318"/>
    <property type="project" value="GO_Central"/>
</dbReference>
<dbReference type="GO" id="GO:0004298">
    <property type="term" value="F:threonine-type endopeptidase activity"/>
    <property type="evidence" value="ECO:0007669"/>
    <property type="project" value="UniProtKB-KW"/>
</dbReference>
<dbReference type="GO" id="GO:0043161">
    <property type="term" value="P:proteasome-mediated ubiquitin-dependent protein catabolic process"/>
    <property type="evidence" value="ECO:0000318"/>
    <property type="project" value="GO_Central"/>
</dbReference>
<dbReference type="CDD" id="cd03763">
    <property type="entry name" value="proteasome_beta_type_7"/>
    <property type="match status" value="1"/>
</dbReference>
<dbReference type="FunFam" id="3.60.20.10:FF:000005">
    <property type="entry name" value="Proteasome subunit beta type-2"/>
    <property type="match status" value="1"/>
</dbReference>
<dbReference type="Gene3D" id="3.60.20.10">
    <property type="entry name" value="Glutamine Phosphoribosylpyrophosphate, subunit 1, domain 1"/>
    <property type="match status" value="1"/>
</dbReference>
<dbReference type="InterPro" id="IPR029055">
    <property type="entry name" value="Ntn_hydrolases_N"/>
</dbReference>
<dbReference type="InterPro" id="IPR024689">
    <property type="entry name" value="Proteasome_bsu_C"/>
</dbReference>
<dbReference type="InterPro" id="IPR016050">
    <property type="entry name" value="Proteasome_bsu_CS"/>
</dbReference>
<dbReference type="InterPro" id="IPR001353">
    <property type="entry name" value="Proteasome_sua/b"/>
</dbReference>
<dbReference type="InterPro" id="IPR023333">
    <property type="entry name" value="Proteasome_suB-type"/>
</dbReference>
<dbReference type="PANTHER" id="PTHR32194">
    <property type="entry name" value="METALLOPROTEASE TLDD"/>
    <property type="match status" value="1"/>
</dbReference>
<dbReference type="PANTHER" id="PTHR32194:SF4">
    <property type="entry name" value="PROTEASOME SUBUNIT BETA TYPE-7"/>
    <property type="match status" value="1"/>
</dbReference>
<dbReference type="Pfam" id="PF12465">
    <property type="entry name" value="Pr_beta_C"/>
    <property type="match status" value="1"/>
</dbReference>
<dbReference type="Pfam" id="PF00227">
    <property type="entry name" value="Proteasome"/>
    <property type="match status" value="1"/>
</dbReference>
<dbReference type="SUPFAM" id="SSF56235">
    <property type="entry name" value="N-terminal nucleophile aminohydrolases (Ntn hydrolases)"/>
    <property type="match status" value="1"/>
</dbReference>
<dbReference type="PROSITE" id="PS00854">
    <property type="entry name" value="PROTEASOME_BETA_1"/>
    <property type="match status" value="1"/>
</dbReference>
<dbReference type="PROSITE" id="PS51476">
    <property type="entry name" value="PROTEASOME_BETA_2"/>
    <property type="match status" value="1"/>
</dbReference>
<accession>Q09841</accession>
<gene>
    <name type="primary">pup1</name>
    <name type="ORF">SPAC23D3.07</name>
</gene>
<comment type="function">
    <text evidence="4">The proteasome is a multicatalytic proteinase complex which is characterized by its ability to cleave peptides with Arg, Phe, Tyr, Leu, and Glu adjacent to the leaving group at neutral or slightly basic pH. The proteasome has an ATP-dependent proteolytic activity (Potential).</text>
</comment>
<comment type="catalytic activity">
    <reaction>
        <text>Cleavage of peptide bonds with very broad specificity.</text>
        <dbReference type="EC" id="3.4.25.1"/>
    </reaction>
</comment>
<comment type="subunit">
    <text evidence="1">The 26S proteasome consists of a 20S proteasome core and two 19S regulatory subunits. The 20S proteasome core is composed of 28 subunits that are arranged in four stacked rings, resulting in a barrel-shaped structure. The two end rings are each formed by seven alpha subunits, and the two central rings are each formed by seven beta subunits. The catalytic chamber with the active sites is on the inside of the barrel (By similarity).</text>
</comment>
<comment type="subcellular location">
    <subcellularLocation>
        <location evidence="2 3">Cytoplasm</location>
    </subcellularLocation>
    <subcellularLocation>
        <location evidence="3">Nucleus</location>
    </subcellularLocation>
</comment>
<comment type="similarity">
    <text evidence="2">Belongs to the peptidase T1B family.</text>
</comment>
<proteinExistence type="evidence at transcript level"/>
<keyword id="KW-0963">Cytoplasm</keyword>
<keyword id="KW-0378">Hydrolase</keyword>
<keyword id="KW-0539">Nucleus</keyword>
<keyword id="KW-0645">Protease</keyword>
<keyword id="KW-0647">Proteasome</keyword>
<keyword id="KW-1185">Reference proteome</keyword>
<keyword id="KW-0888">Threonine protease</keyword>
<keyword id="KW-0865">Zymogen</keyword>
<reference key="1">
    <citation type="journal article" date="2002" name="Nature">
        <title>The genome sequence of Schizosaccharomyces pombe.</title>
        <authorList>
            <person name="Wood V."/>
            <person name="Gwilliam R."/>
            <person name="Rajandream M.A."/>
            <person name="Lyne M.H."/>
            <person name="Lyne R."/>
            <person name="Stewart A."/>
            <person name="Sgouros J.G."/>
            <person name="Peat N."/>
            <person name="Hayles J."/>
            <person name="Baker S.G."/>
            <person name="Basham D."/>
            <person name="Bowman S."/>
            <person name="Brooks K."/>
            <person name="Brown D."/>
            <person name="Brown S."/>
            <person name="Chillingworth T."/>
            <person name="Churcher C.M."/>
            <person name="Collins M."/>
            <person name="Connor R."/>
            <person name="Cronin A."/>
            <person name="Davis P."/>
            <person name="Feltwell T."/>
            <person name="Fraser A."/>
            <person name="Gentles S."/>
            <person name="Goble A."/>
            <person name="Hamlin N."/>
            <person name="Harris D.E."/>
            <person name="Hidalgo J."/>
            <person name="Hodgson G."/>
            <person name="Holroyd S."/>
            <person name="Hornsby T."/>
            <person name="Howarth S."/>
            <person name="Huckle E.J."/>
            <person name="Hunt S."/>
            <person name="Jagels K."/>
            <person name="James K.D."/>
            <person name="Jones L."/>
            <person name="Jones M."/>
            <person name="Leather S."/>
            <person name="McDonald S."/>
            <person name="McLean J."/>
            <person name="Mooney P."/>
            <person name="Moule S."/>
            <person name="Mungall K.L."/>
            <person name="Murphy L.D."/>
            <person name="Niblett D."/>
            <person name="Odell C."/>
            <person name="Oliver K."/>
            <person name="O'Neil S."/>
            <person name="Pearson D."/>
            <person name="Quail M.A."/>
            <person name="Rabbinowitsch E."/>
            <person name="Rutherford K.M."/>
            <person name="Rutter S."/>
            <person name="Saunders D."/>
            <person name="Seeger K."/>
            <person name="Sharp S."/>
            <person name="Skelton J."/>
            <person name="Simmonds M.N."/>
            <person name="Squares R."/>
            <person name="Squares S."/>
            <person name="Stevens K."/>
            <person name="Taylor K."/>
            <person name="Taylor R.G."/>
            <person name="Tivey A."/>
            <person name="Walsh S.V."/>
            <person name="Warren T."/>
            <person name="Whitehead S."/>
            <person name="Woodward J.R."/>
            <person name="Volckaert G."/>
            <person name="Aert R."/>
            <person name="Robben J."/>
            <person name="Grymonprez B."/>
            <person name="Weltjens I."/>
            <person name="Vanstreels E."/>
            <person name="Rieger M."/>
            <person name="Schaefer M."/>
            <person name="Mueller-Auer S."/>
            <person name="Gabel C."/>
            <person name="Fuchs M."/>
            <person name="Duesterhoeft A."/>
            <person name="Fritzc C."/>
            <person name="Holzer E."/>
            <person name="Moestl D."/>
            <person name="Hilbert H."/>
            <person name="Borzym K."/>
            <person name="Langer I."/>
            <person name="Beck A."/>
            <person name="Lehrach H."/>
            <person name="Reinhardt R."/>
            <person name="Pohl T.M."/>
            <person name="Eger P."/>
            <person name="Zimmermann W."/>
            <person name="Wedler H."/>
            <person name="Wambutt R."/>
            <person name="Purnelle B."/>
            <person name="Goffeau A."/>
            <person name="Cadieu E."/>
            <person name="Dreano S."/>
            <person name="Gloux S."/>
            <person name="Lelaure V."/>
            <person name="Mottier S."/>
            <person name="Galibert F."/>
            <person name="Aves S.J."/>
            <person name="Xiang Z."/>
            <person name="Hunt C."/>
            <person name="Moore K."/>
            <person name="Hurst S.M."/>
            <person name="Lucas M."/>
            <person name="Rochet M."/>
            <person name="Gaillardin C."/>
            <person name="Tallada V.A."/>
            <person name="Garzon A."/>
            <person name="Thode G."/>
            <person name="Daga R.R."/>
            <person name="Cruzado L."/>
            <person name="Jimenez J."/>
            <person name="Sanchez M."/>
            <person name="del Rey F."/>
            <person name="Benito J."/>
            <person name="Dominguez A."/>
            <person name="Revuelta J.L."/>
            <person name="Moreno S."/>
            <person name="Armstrong J."/>
            <person name="Forsburg S.L."/>
            <person name="Cerutti L."/>
            <person name="Lowe T."/>
            <person name="McCombie W.R."/>
            <person name="Paulsen I."/>
            <person name="Potashkin J."/>
            <person name="Shpakovski G.V."/>
            <person name="Ussery D."/>
            <person name="Barrell B.G."/>
            <person name="Nurse P."/>
        </authorList>
    </citation>
    <scope>NUCLEOTIDE SEQUENCE [LARGE SCALE GENOMIC DNA]</scope>
    <source>
        <strain>972 / ATCC 24843</strain>
    </source>
</reference>
<reference key="2">
    <citation type="journal article" date="1997" name="DNA Res.">
        <title>Identification of open reading frames in Schizosaccharomyces pombe cDNAs.</title>
        <authorList>
            <person name="Yoshioka S."/>
            <person name="Kato K."/>
            <person name="Nakai K."/>
            <person name="Okayama H."/>
            <person name="Nojima H."/>
        </authorList>
    </citation>
    <scope>NUCLEOTIDE SEQUENCE [LARGE SCALE MRNA] OF 10-267</scope>
    <source>
        <strain>PR745</strain>
    </source>
</reference>
<reference key="3">
    <citation type="journal article" date="2006" name="Nat. Biotechnol.">
        <title>ORFeome cloning and global analysis of protein localization in the fission yeast Schizosaccharomyces pombe.</title>
        <authorList>
            <person name="Matsuyama A."/>
            <person name="Arai R."/>
            <person name="Yashiroda Y."/>
            <person name="Shirai A."/>
            <person name="Kamata A."/>
            <person name="Sekido S."/>
            <person name="Kobayashi Y."/>
            <person name="Hashimoto A."/>
            <person name="Hamamoto M."/>
            <person name="Hiraoka Y."/>
            <person name="Horinouchi S."/>
            <person name="Yoshida M."/>
        </authorList>
    </citation>
    <scope>SUBCELLULAR LOCATION [LARGE SCALE ANALYSIS]</scope>
</reference>
<protein>
    <recommendedName>
        <fullName>Probable proteasome subunit beta type-2</fullName>
        <ecNumber>3.4.25.1</ecNumber>
    </recommendedName>
</protein>
<organism>
    <name type="scientific">Schizosaccharomyces pombe (strain 972 / ATCC 24843)</name>
    <name type="common">Fission yeast</name>
    <dbReference type="NCBI Taxonomy" id="284812"/>
    <lineage>
        <taxon>Eukaryota</taxon>
        <taxon>Fungi</taxon>
        <taxon>Dikarya</taxon>
        <taxon>Ascomycota</taxon>
        <taxon>Taphrinomycotina</taxon>
        <taxon>Schizosaccharomycetes</taxon>
        <taxon>Schizosaccharomycetales</taxon>
        <taxon>Schizosaccharomycetaceae</taxon>
        <taxon>Schizosaccharomyces</taxon>
    </lineage>
</organism>
<name>PSB2_SCHPO</name>
<feature type="propeptide" id="PRO_0000026655" description="Removed in mature form" evidence="1">
    <location>
        <begin position="1"/>
        <end position="35"/>
    </location>
</feature>
<feature type="chain" id="PRO_0000026656" description="Probable proteasome subunit beta type-2">
    <location>
        <begin position="36"/>
        <end position="267"/>
    </location>
</feature>
<feature type="active site" description="Nucleophile" evidence="1">
    <location>
        <position position="36"/>
    </location>
</feature>
<sequence length="267" mass="29337">MMGINERKGFDFEYYQRNLLLQEKGFPTPKATSTGTTIVGVIAKDCIVLGADTRATAGPIIADKNCKKLHLISPNIWCAGAGTAADTEFVTSMISSNIELHSLYTNRKPRVVTALTMLKQHLFRYQGHIGAYLVLGGYDCKGPHLFTIAAHGSSDKLPYVALGSGSLAAISVLETKYQPDLERHEAMELVKEAIEAGIFNDLGSGSNCDLVVIDEEKATPYRGYSKPNERATKQSKYTYDRGTTAVLKEDIYKFVTVQDLDEMQVDV</sequence>